<feature type="chain" id="PRO_1000140956" description="Small ribosomal subunit protein uS3">
    <location>
        <begin position="1"/>
        <end position="216"/>
    </location>
</feature>
<feature type="domain" description="KH type-2" evidence="1">
    <location>
        <begin position="38"/>
        <end position="108"/>
    </location>
</feature>
<gene>
    <name evidence="1" type="primary">rpsC</name>
    <name type="ordered locus">Dole_0714</name>
</gene>
<accession>A8ZV63</accession>
<organism>
    <name type="scientific">Desulfosudis oleivorans (strain DSM 6200 / JCM 39069 / Hxd3)</name>
    <name type="common">Desulfococcus oleovorans</name>
    <dbReference type="NCBI Taxonomy" id="96561"/>
    <lineage>
        <taxon>Bacteria</taxon>
        <taxon>Pseudomonadati</taxon>
        <taxon>Thermodesulfobacteriota</taxon>
        <taxon>Desulfobacteria</taxon>
        <taxon>Desulfobacterales</taxon>
        <taxon>Desulfosudaceae</taxon>
        <taxon>Desulfosudis</taxon>
    </lineage>
</organism>
<proteinExistence type="inferred from homology"/>
<protein>
    <recommendedName>
        <fullName evidence="1">Small ribosomal subunit protein uS3</fullName>
    </recommendedName>
    <alternativeName>
        <fullName evidence="2">30S ribosomal protein S3</fullName>
    </alternativeName>
</protein>
<evidence type="ECO:0000255" key="1">
    <source>
        <dbReference type="HAMAP-Rule" id="MF_01309"/>
    </source>
</evidence>
<evidence type="ECO:0000305" key="2"/>
<dbReference type="EMBL" id="CP000859">
    <property type="protein sequence ID" value="ABW66524.1"/>
    <property type="molecule type" value="Genomic_DNA"/>
</dbReference>
<dbReference type="RefSeq" id="WP_012174142.1">
    <property type="nucleotide sequence ID" value="NC_009943.1"/>
</dbReference>
<dbReference type="SMR" id="A8ZV63"/>
<dbReference type="STRING" id="96561.Dole_0714"/>
<dbReference type="KEGG" id="dol:Dole_0714"/>
<dbReference type="eggNOG" id="COG0092">
    <property type="taxonomic scope" value="Bacteria"/>
</dbReference>
<dbReference type="HOGENOM" id="CLU_058591_0_2_7"/>
<dbReference type="OrthoDB" id="9806396at2"/>
<dbReference type="Proteomes" id="UP000008561">
    <property type="component" value="Chromosome"/>
</dbReference>
<dbReference type="GO" id="GO:0022627">
    <property type="term" value="C:cytosolic small ribosomal subunit"/>
    <property type="evidence" value="ECO:0007669"/>
    <property type="project" value="TreeGrafter"/>
</dbReference>
<dbReference type="GO" id="GO:0003729">
    <property type="term" value="F:mRNA binding"/>
    <property type="evidence" value="ECO:0007669"/>
    <property type="project" value="UniProtKB-UniRule"/>
</dbReference>
<dbReference type="GO" id="GO:0019843">
    <property type="term" value="F:rRNA binding"/>
    <property type="evidence" value="ECO:0007669"/>
    <property type="project" value="UniProtKB-UniRule"/>
</dbReference>
<dbReference type="GO" id="GO:0003735">
    <property type="term" value="F:structural constituent of ribosome"/>
    <property type="evidence" value="ECO:0007669"/>
    <property type="project" value="InterPro"/>
</dbReference>
<dbReference type="GO" id="GO:0006412">
    <property type="term" value="P:translation"/>
    <property type="evidence" value="ECO:0007669"/>
    <property type="project" value="UniProtKB-UniRule"/>
</dbReference>
<dbReference type="CDD" id="cd02412">
    <property type="entry name" value="KH-II_30S_S3"/>
    <property type="match status" value="1"/>
</dbReference>
<dbReference type="FunFam" id="3.30.1140.32:FF:000002">
    <property type="entry name" value="30S ribosomal protein S3"/>
    <property type="match status" value="1"/>
</dbReference>
<dbReference type="FunFam" id="3.30.300.20:FF:000001">
    <property type="entry name" value="30S ribosomal protein S3"/>
    <property type="match status" value="1"/>
</dbReference>
<dbReference type="Gene3D" id="3.30.300.20">
    <property type="match status" value="1"/>
</dbReference>
<dbReference type="Gene3D" id="3.30.1140.32">
    <property type="entry name" value="Ribosomal protein S3, C-terminal domain"/>
    <property type="match status" value="1"/>
</dbReference>
<dbReference type="HAMAP" id="MF_01309_B">
    <property type="entry name" value="Ribosomal_uS3_B"/>
    <property type="match status" value="1"/>
</dbReference>
<dbReference type="InterPro" id="IPR004087">
    <property type="entry name" value="KH_dom"/>
</dbReference>
<dbReference type="InterPro" id="IPR015946">
    <property type="entry name" value="KH_dom-like_a/b"/>
</dbReference>
<dbReference type="InterPro" id="IPR004044">
    <property type="entry name" value="KH_dom_type_2"/>
</dbReference>
<dbReference type="InterPro" id="IPR009019">
    <property type="entry name" value="KH_sf_prok-type"/>
</dbReference>
<dbReference type="InterPro" id="IPR036419">
    <property type="entry name" value="Ribosomal_S3_C_sf"/>
</dbReference>
<dbReference type="InterPro" id="IPR005704">
    <property type="entry name" value="Ribosomal_uS3_bac-typ"/>
</dbReference>
<dbReference type="InterPro" id="IPR001351">
    <property type="entry name" value="Ribosomal_uS3_C"/>
</dbReference>
<dbReference type="InterPro" id="IPR018280">
    <property type="entry name" value="Ribosomal_uS3_CS"/>
</dbReference>
<dbReference type="NCBIfam" id="TIGR01009">
    <property type="entry name" value="rpsC_bact"/>
    <property type="match status" value="1"/>
</dbReference>
<dbReference type="PANTHER" id="PTHR11760">
    <property type="entry name" value="30S/40S RIBOSOMAL PROTEIN S3"/>
    <property type="match status" value="1"/>
</dbReference>
<dbReference type="PANTHER" id="PTHR11760:SF19">
    <property type="entry name" value="SMALL RIBOSOMAL SUBUNIT PROTEIN US3C"/>
    <property type="match status" value="1"/>
</dbReference>
<dbReference type="Pfam" id="PF07650">
    <property type="entry name" value="KH_2"/>
    <property type="match status" value="1"/>
</dbReference>
<dbReference type="Pfam" id="PF00189">
    <property type="entry name" value="Ribosomal_S3_C"/>
    <property type="match status" value="1"/>
</dbReference>
<dbReference type="SMART" id="SM00322">
    <property type="entry name" value="KH"/>
    <property type="match status" value="1"/>
</dbReference>
<dbReference type="SUPFAM" id="SSF54814">
    <property type="entry name" value="Prokaryotic type KH domain (KH-domain type II)"/>
    <property type="match status" value="1"/>
</dbReference>
<dbReference type="SUPFAM" id="SSF54821">
    <property type="entry name" value="Ribosomal protein S3 C-terminal domain"/>
    <property type="match status" value="1"/>
</dbReference>
<dbReference type="PROSITE" id="PS50823">
    <property type="entry name" value="KH_TYPE_2"/>
    <property type="match status" value="1"/>
</dbReference>
<dbReference type="PROSITE" id="PS00548">
    <property type="entry name" value="RIBOSOMAL_S3"/>
    <property type="match status" value="1"/>
</dbReference>
<sequence>MGQKVNPEGLRLGIVKTWQSRWYADKEYADFILEDFKLREFVKKKLHHAGIAKVEIERSLNRIRLRIFAARPGIVIGKKGNEIEQLKNEIRQKVVAGKDLAIDIQEVKKPETVAQLVAENVAGQLERRVAFRRAMKRGVSSAMRFGVKGIKIICSGRLGGAEMARREWYREGRVPLHTLRADVDYGFVEASTTYGRIGVKVFIFKGEVLKDERKKN</sequence>
<reference key="1">
    <citation type="submission" date="2007-10" db="EMBL/GenBank/DDBJ databases">
        <title>Complete sequence of Desulfococcus oleovorans Hxd3.</title>
        <authorList>
            <consortium name="US DOE Joint Genome Institute"/>
            <person name="Copeland A."/>
            <person name="Lucas S."/>
            <person name="Lapidus A."/>
            <person name="Barry K."/>
            <person name="Glavina del Rio T."/>
            <person name="Dalin E."/>
            <person name="Tice H."/>
            <person name="Pitluck S."/>
            <person name="Kiss H."/>
            <person name="Brettin T."/>
            <person name="Bruce D."/>
            <person name="Detter J.C."/>
            <person name="Han C."/>
            <person name="Schmutz J."/>
            <person name="Larimer F."/>
            <person name="Land M."/>
            <person name="Hauser L."/>
            <person name="Kyrpides N."/>
            <person name="Kim E."/>
            <person name="Wawrik B."/>
            <person name="Richardson P."/>
        </authorList>
    </citation>
    <scope>NUCLEOTIDE SEQUENCE [LARGE SCALE GENOMIC DNA]</scope>
    <source>
        <strain>DSM 6200 / JCM 39069 / Hxd3</strain>
    </source>
</reference>
<name>RS3_DESOH</name>
<keyword id="KW-1185">Reference proteome</keyword>
<keyword id="KW-0687">Ribonucleoprotein</keyword>
<keyword id="KW-0689">Ribosomal protein</keyword>
<keyword id="KW-0694">RNA-binding</keyword>
<keyword id="KW-0699">rRNA-binding</keyword>
<comment type="function">
    <text evidence="1">Binds the lower part of the 30S subunit head. Binds mRNA in the 70S ribosome, positioning it for translation.</text>
</comment>
<comment type="subunit">
    <text evidence="1">Part of the 30S ribosomal subunit. Forms a tight complex with proteins S10 and S14.</text>
</comment>
<comment type="similarity">
    <text evidence="1">Belongs to the universal ribosomal protein uS3 family.</text>
</comment>